<feature type="chain" id="PRO_0000072085" description="Stage V sporulation protein M">
    <location>
        <begin position="1"/>
        <end position="26"/>
    </location>
</feature>
<feature type="region of interest" description="Important for localization" evidence="1">
    <location>
        <begin position="3"/>
        <end position="9"/>
    </location>
</feature>
<feature type="mutagenesis site" description="Strongly impairs sporulation, but does not affect localization." evidence="1">
    <original>K</original>
    <variation>A</variation>
    <location>
        <position position="2"/>
    </location>
</feature>
<feature type="mutagenesis site" description="Causes mislocalization and strongly impairs sporulation. Does not affect membrane association." evidence="1">
    <original>F</original>
    <variation>A</variation>
    <location>
        <position position="3"/>
    </location>
</feature>
<feature type="mutagenesis site" description="Strongly impairs sporulation, but does not affect localization." evidence="1">
    <original>Y</original>
    <variation>A</variation>
    <location>
        <position position="4"/>
    </location>
</feature>
<feature type="mutagenesis site" description="Causes mislocalization and strongly impairs sporulation. Does not affect membrane association." evidence="1">
    <original>I</original>
    <variation>A</variation>
    <location>
        <position position="6"/>
    </location>
</feature>
<feature type="mutagenesis site" description="Strongly impairs sporulation, but does not affect localization." evidence="1">
    <original>L</original>
    <variation>A</variation>
    <location>
        <position position="8"/>
    </location>
</feature>
<feature type="mutagenesis site" description="Causes mislocalization and strongly impairs sporulation. Does not affect membrane association." evidence="1">
    <original>P</original>
    <variation>A</variation>
    <location>
        <position position="9"/>
    </location>
</feature>
<feature type="mutagenesis site" description="Slightly affects localization and sporulation." evidence="7">
    <original>P</original>
    <variation>G</variation>
    <location>
        <position position="9"/>
    </location>
</feature>
<feature type="mutagenesis site" description="Strongly impairs sporulation, but does not affect localization." evidence="1">
    <original>L</original>
    <variation>A</variation>
    <location>
        <position position="12"/>
    </location>
</feature>
<feature type="mutagenesis site" description="Specifically impairs cortex assembly, but not the initiation of coat assembly. Strongly impairs sporulation, but does not affect localization." evidence="1 4">
    <original>I</original>
    <variation>A</variation>
    <location>
        <position position="15"/>
    </location>
</feature>
<feature type="mutagenesis site" description="Does not affect localization or sporulation." evidence="1">
    <original>R</original>
    <variation>A</variation>
    <location>
        <position position="17"/>
    </location>
</feature>
<feature type="mutagenesis site" description="Localizes to the mother cell cytosol." evidence="6">
    <original>R</original>
    <variation>D</variation>
    <location>
        <position position="17"/>
    </location>
</feature>
<feature type="helix" evidence="14">
    <location>
        <begin position="11"/>
        <end position="23"/>
    </location>
</feature>
<protein>
    <recommendedName>
        <fullName evidence="11">Stage V sporulation protein M</fullName>
    </recommendedName>
</protein>
<organism>
    <name type="scientific">Bacillus subtilis (strain 168)</name>
    <dbReference type="NCBI Taxonomy" id="224308"/>
    <lineage>
        <taxon>Bacteria</taxon>
        <taxon>Bacillati</taxon>
        <taxon>Bacillota</taxon>
        <taxon>Bacilli</taxon>
        <taxon>Bacillales</taxon>
        <taxon>Bacillaceae</taxon>
        <taxon>Bacillus</taxon>
    </lineage>
</organism>
<dbReference type="EMBL" id="L12244">
    <property type="protein sequence ID" value="AAC36809.1"/>
    <property type="molecule type" value="Unassigned_DNA"/>
</dbReference>
<dbReference type="EMBL" id="Y13937">
    <property type="protein sequence ID" value="CAA74254.1"/>
    <property type="molecule type" value="Genomic_DNA"/>
</dbReference>
<dbReference type="EMBL" id="AL009126">
    <property type="protein sequence ID" value="CAB13454.1"/>
    <property type="molecule type" value="Genomic_DNA"/>
</dbReference>
<dbReference type="PIR" id="S39981">
    <property type="entry name" value="S39981"/>
</dbReference>
<dbReference type="RefSeq" id="NP_389463.1">
    <property type="nucleotide sequence ID" value="NC_000964.3"/>
</dbReference>
<dbReference type="RefSeq" id="WP_003221545.1">
    <property type="nucleotide sequence ID" value="NZ_OZ025638.1"/>
</dbReference>
<dbReference type="PDB" id="2MVH">
    <property type="method" value="NMR"/>
    <property type="chains" value="A=1-26"/>
</dbReference>
<dbReference type="PDB" id="2MVJ">
    <property type="method" value="NMR"/>
    <property type="chains" value="A=1-26"/>
</dbReference>
<dbReference type="PDBsum" id="2MVH"/>
<dbReference type="PDBsum" id="2MVJ"/>
<dbReference type="BMRB" id="P37817"/>
<dbReference type="SMR" id="P37817"/>
<dbReference type="FunCoup" id="P37817">
    <property type="interactions" value="82"/>
</dbReference>
<dbReference type="STRING" id="224308.BSU15810"/>
<dbReference type="PaxDb" id="224308-BSU15810"/>
<dbReference type="EnsemblBacteria" id="CAB13454">
    <property type="protein sequence ID" value="CAB13454"/>
    <property type="gene ID" value="BSU_15810"/>
</dbReference>
<dbReference type="GeneID" id="92861605"/>
<dbReference type="GeneID" id="937168"/>
<dbReference type="KEGG" id="bsu:BSU15810"/>
<dbReference type="PATRIC" id="fig|224308.179.peg.1721"/>
<dbReference type="InParanoid" id="P37817"/>
<dbReference type="BioCyc" id="BSUB:BSU15810-MONOMER"/>
<dbReference type="EvolutionaryTrace" id="P37817"/>
<dbReference type="PRO" id="PR:P37817"/>
<dbReference type="Proteomes" id="UP000001570">
    <property type="component" value="Chromosome"/>
</dbReference>
<dbReference type="GO" id="GO:0016020">
    <property type="term" value="C:membrane"/>
    <property type="evidence" value="ECO:0007669"/>
    <property type="project" value="UniProtKB-KW"/>
</dbReference>
<dbReference type="GO" id="GO:0030435">
    <property type="term" value="P:sporulation resulting in formation of a cellular spore"/>
    <property type="evidence" value="ECO:0007669"/>
    <property type="project" value="UniProtKB-KW"/>
</dbReference>
<dbReference type="InterPro" id="IPR012609">
    <property type="entry name" value="Spore_V_M"/>
</dbReference>
<dbReference type="NCBIfam" id="NF011327">
    <property type="entry name" value="PRK14741.1"/>
    <property type="match status" value="1"/>
</dbReference>
<dbReference type="NCBIfam" id="NF033436">
    <property type="entry name" value="SpoVM_broad"/>
    <property type="match status" value="1"/>
</dbReference>
<dbReference type="Pfam" id="PF08183">
    <property type="entry name" value="SpoV"/>
    <property type="match status" value="1"/>
</dbReference>
<comment type="function">
    <text evidence="2 4 8 9">Coordinates cortex and coat assembly during sporulation (PubMed:22463703, PubMed:8231808). Associates with the spore coat protein SpoIVA and with the outer forespore membrane, thereby serving as a membrane anchor that tethers SpoIVA and the entire spore coat to the forespore surface (PubMed:17427285). May also serve as a competitive inhibitor of FtsH activity during sporulation (PubMed:9287010).</text>
</comment>
<comment type="subunit">
    <text evidence="2 9">Interacts with SpoIVA (PubMed:17427285). May interact with the ATP-dependent protease FtsH (PubMed:9287010).</text>
</comment>
<comment type="subcellular location">
    <subcellularLocation>
        <location evidence="1 2 4 6 7">Forespore outer membrane</location>
        <topology evidence="1 2 6">Peripheral membrane protein</topology>
    </subcellularLocation>
    <text evidence="2 6">SpoVM is an atypical amphipathic alpha-helix deeply embedded in the membrane (PubMed:25825747). Proper localization depends on SpoIVA (PubMed:17427285).</text>
</comment>
<comment type="induction">
    <text evidence="3 8">Expressed during sporulation and is regulated by the mother cell-specific transcription factors sigma E and SpoIIID (PubMed:8231808). There is a lag-phase of approximately 2 hours between the onset of transcription and translation (PubMed:18820968). The 5' untranslated region negatively influences its own translation (PubMed:18820968).</text>
</comment>
<comment type="domain">
    <text evidence="1">Residues in the N-terminal region are required for proper localization.</text>
</comment>
<comment type="biotechnology">
    <text evidence="5">Nanomolar concentrations inhibit biofilm formation in situ, in S.aureus and in P.aeruginosa, suggesting it might be useful controlling bacterial infections.</text>
</comment>
<comment type="miscellaneous">
    <text evidence="6 7">Preferentially localizes to slightly convex membranes (PubMed:25825747, PubMed:29102609). This preferential adsorption is accurately modeled as a two-step 'dash-and-recruit' mechanism: first, an initial binding event occurs with a faster on rate, then cooperative recruitment of additional SpoVM molecules follows (PubMed:29102609).</text>
</comment>
<reference key="1">
    <citation type="journal article" date="1993" name="Mol. Microbiol.">
        <title>An unusually small gene required for sporulation by Bacillus subtilis.</title>
        <authorList>
            <person name="Levin P.A."/>
            <person name="Fan N."/>
            <person name="Ricca E."/>
            <person name="Driks A."/>
            <person name="Losick R."/>
            <person name="Cutting S.M."/>
        </authorList>
    </citation>
    <scope>NUCLEOTIDE SEQUENCE [GENOMIC DNA]</scope>
    <scope>FUNCTION</scope>
    <scope>INDUCTION</scope>
    <source>
        <strain>168 / PY79</strain>
    </source>
</reference>
<reference key="2">
    <citation type="journal article" date="1998" name="Microbiology">
        <title>A 28 kbp segment from the spoVM region of the Bacillus subtilis 168 genome.</title>
        <authorList>
            <person name="Foulger D."/>
            <person name="Errington J."/>
        </authorList>
    </citation>
    <scope>NUCLEOTIDE SEQUENCE [GENOMIC DNA]</scope>
    <source>
        <strain>168</strain>
    </source>
</reference>
<reference key="3">
    <citation type="journal article" date="1997" name="Nature">
        <title>The complete genome sequence of the Gram-positive bacterium Bacillus subtilis.</title>
        <authorList>
            <person name="Kunst F."/>
            <person name="Ogasawara N."/>
            <person name="Moszer I."/>
            <person name="Albertini A.M."/>
            <person name="Alloni G."/>
            <person name="Azevedo V."/>
            <person name="Bertero M.G."/>
            <person name="Bessieres P."/>
            <person name="Bolotin A."/>
            <person name="Borchert S."/>
            <person name="Borriss R."/>
            <person name="Boursier L."/>
            <person name="Brans A."/>
            <person name="Braun M."/>
            <person name="Brignell S.C."/>
            <person name="Bron S."/>
            <person name="Brouillet S."/>
            <person name="Bruschi C.V."/>
            <person name="Caldwell B."/>
            <person name="Capuano V."/>
            <person name="Carter N.M."/>
            <person name="Choi S.-K."/>
            <person name="Codani J.-J."/>
            <person name="Connerton I.F."/>
            <person name="Cummings N.J."/>
            <person name="Daniel R.A."/>
            <person name="Denizot F."/>
            <person name="Devine K.M."/>
            <person name="Duesterhoeft A."/>
            <person name="Ehrlich S.D."/>
            <person name="Emmerson P.T."/>
            <person name="Entian K.-D."/>
            <person name="Errington J."/>
            <person name="Fabret C."/>
            <person name="Ferrari E."/>
            <person name="Foulger D."/>
            <person name="Fritz C."/>
            <person name="Fujita M."/>
            <person name="Fujita Y."/>
            <person name="Fuma S."/>
            <person name="Galizzi A."/>
            <person name="Galleron N."/>
            <person name="Ghim S.-Y."/>
            <person name="Glaser P."/>
            <person name="Goffeau A."/>
            <person name="Golightly E.J."/>
            <person name="Grandi G."/>
            <person name="Guiseppi G."/>
            <person name="Guy B.J."/>
            <person name="Haga K."/>
            <person name="Haiech J."/>
            <person name="Harwood C.R."/>
            <person name="Henaut A."/>
            <person name="Hilbert H."/>
            <person name="Holsappel S."/>
            <person name="Hosono S."/>
            <person name="Hullo M.-F."/>
            <person name="Itaya M."/>
            <person name="Jones L.-M."/>
            <person name="Joris B."/>
            <person name="Karamata D."/>
            <person name="Kasahara Y."/>
            <person name="Klaerr-Blanchard M."/>
            <person name="Klein C."/>
            <person name="Kobayashi Y."/>
            <person name="Koetter P."/>
            <person name="Koningstein G."/>
            <person name="Krogh S."/>
            <person name="Kumano M."/>
            <person name="Kurita K."/>
            <person name="Lapidus A."/>
            <person name="Lardinois S."/>
            <person name="Lauber J."/>
            <person name="Lazarevic V."/>
            <person name="Lee S.-M."/>
            <person name="Levine A."/>
            <person name="Liu H."/>
            <person name="Masuda S."/>
            <person name="Mauel C."/>
            <person name="Medigue C."/>
            <person name="Medina N."/>
            <person name="Mellado R.P."/>
            <person name="Mizuno M."/>
            <person name="Moestl D."/>
            <person name="Nakai S."/>
            <person name="Noback M."/>
            <person name="Noone D."/>
            <person name="O'Reilly M."/>
            <person name="Ogawa K."/>
            <person name="Ogiwara A."/>
            <person name="Oudega B."/>
            <person name="Park S.-H."/>
            <person name="Parro V."/>
            <person name="Pohl T.M."/>
            <person name="Portetelle D."/>
            <person name="Porwollik S."/>
            <person name="Prescott A.M."/>
            <person name="Presecan E."/>
            <person name="Pujic P."/>
            <person name="Purnelle B."/>
            <person name="Rapoport G."/>
            <person name="Rey M."/>
            <person name="Reynolds S."/>
            <person name="Rieger M."/>
            <person name="Rivolta C."/>
            <person name="Rocha E."/>
            <person name="Roche B."/>
            <person name="Rose M."/>
            <person name="Sadaie Y."/>
            <person name="Sato T."/>
            <person name="Scanlan E."/>
            <person name="Schleich S."/>
            <person name="Schroeter R."/>
            <person name="Scoffone F."/>
            <person name="Sekiguchi J."/>
            <person name="Sekowska A."/>
            <person name="Seror S.J."/>
            <person name="Serror P."/>
            <person name="Shin B.-S."/>
            <person name="Soldo B."/>
            <person name="Sorokin A."/>
            <person name="Tacconi E."/>
            <person name="Takagi T."/>
            <person name="Takahashi H."/>
            <person name="Takemaru K."/>
            <person name="Takeuchi M."/>
            <person name="Tamakoshi A."/>
            <person name="Tanaka T."/>
            <person name="Terpstra P."/>
            <person name="Tognoni A."/>
            <person name="Tosato V."/>
            <person name="Uchiyama S."/>
            <person name="Vandenbol M."/>
            <person name="Vannier F."/>
            <person name="Vassarotti A."/>
            <person name="Viari A."/>
            <person name="Wambutt R."/>
            <person name="Wedler E."/>
            <person name="Wedler H."/>
            <person name="Weitzenegger T."/>
            <person name="Winters P."/>
            <person name="Wipat A."/>
            <person name="Yamamoto H."/>
            <person name="Yamane K."/>
            <person name="Yasumoto K."/>
            <person name="Yata K."/>
            <person name="Yoshida K."/>
            <person name="Yoshikawa H.-F."/>
            <person name="Zumstein E."/>
            <person name="Yoshikawa H."/>
            <person name="Danchin A."/>
        </authorList>
    </citation>
    <scope>NUCLEOTIDE SEQUENCE [LARGE SCALE GENOMIC DNA]</scope>
    <source>
        <strain>168</strain>
    </source>
</reference>
<reference key="4">
    <citation type="journal article" date="1997" name="J. Bacteriol.">
        <title>SpoVM, a small protein essential to development in Bacillus subtilis, interacts with the ATP-dependent protease FtsH.</title>
        <authorList>
            <person name="Cutting S."/>
            <person name="Anderson M."/>
            <person name="Lysenko E."/>
            <person name="Page A."/>
            <person name="Tomoyasu T."/>
            <person name="Tatematsu K."/>
            <person name="Tatsuta T."/>
            <person name="Kroos L."/>
            <person name="Ogura T."/>
        </authorList>
    </citation>
    <scope>FUNCTION</scope>
    <scope>INTERACTION WITH FTSH</scope>
    <source>
        <strain>168 / PY79</strain>
    </source>
</reference>
<reference key="5">
    <citation type="journal article" date="2003" name="J. Bacteriol.">
        <title>Subcellular localization of a small sporulation protein in Bacillus subtilis.</title>
        <authorList>
            <person name="van Ooij C."/>
            <person name="Losick R."/>
        </authorList>
    </citation>
    <scope>SUBCELLULAR LOCATION</scope>
    <scope>DOMAIN</scope>
    <scope>MUTAGENESIS OF LYS-2; PHE-3; TYR-4; ILE-6; LEU-8; PRO-9; LEU-12; ILE-15 AND ARG-17</scope>
    <source>
        <strain>168 / PY79</strain>
    </source>
</reference>
<reference key="6">
    <citation type="journal article" date="2006" name="Mol. Microbiol.">
        <title>Peptide anchoring spore coat assembly to the outer forespore membrane in Bacillus subtilis.</title>
        <authorList>
            <person name="Ramamurthi K.S."/>
            <person name="Clapham K.R."/>
            <person name="Losick R."/>
        </authorList>
    </citation>
    <scope>FUNCTION</scope>
    <scope>SUBCELLULAR LOCATION</scope>
    <scope>INTERACTION WITH SPOIVA</scope>
</reference>
<reference key="7">
    <citation type="journal article" date="2008" name="Curr. Microbiol.">
        <title>Regulation of the spoVM gene of Bacillus subtilis.</title>
        <authorList>
            <person name="Le A.T."/>
            <person name="Schumann W."/>
        </authorList>
    </citation>
    <scope>INDUCTION</scope>
</reference>
<reference key="8">
    <citation type="journal article" date="2012" name="Mol. Microbiol.">
        <title>Small proteins link coat and cortex assembly during sporulation in Bacillus subtilis.</title>
        <authorList>
            <person name="Ebmeier S.E."/>
            <person name="Tan I.S."/>
            <person name="Clapham K.R."/>
            <person name="Ramamurthi K.S."/>
        </authorList>
    </citation>
    <scope>FUNCTION</scope>
    <scope>SUBCELLULAR LOCATION</scope>
    <scope>MUTAGENESIS OF ILE-15</scope>
</reference>
<reference key="9">
    <citation type="journal article" date="2017" name="Cell Syst.">
        <title>Dash-and-recruit mechanism drives membrane curvature recognition by the small bacterial protein SpoVM.</title>
        <authorList>
            <person name="Kim E.Y."/>
            <person name="Tyndall E.R."/>
            <person name="Huang K.C."/>
            <person name="Tian F."/>
            <person name="Ramamurthi K.S."/>
        </authorList>
    </citation>
    <scope>SUBCELLULAR LOCATION</scope>
    <scope>MUTAGENESIS OF PRO-9</scope>
</reference>
<reference key="10">
    <citation type="journal article" date="2012" name="Mol. Microbiol.">
        <title>The biofilm formation defect of a Bacillus subtilis flotillin-defective mutant involves the protease FtsH.</title>
        <authorList>
            <person name="Yepes A."/>
            <person name="Schneider J."/>
            <person name="Mielich B."/>
            <person name="Koch G."/>
            <person name="Garcia-Betancur J.C."/>
            <person name="Ramamurthi K.S."/>
            <person name="Vlamakis H."/>
            <person name="Lopez D."/>
        </authorList>
    </citation>
    <scope>BIOTECHNOLOGY</scope>
    <source>
        <strain>168 / Marburg / ATCC 6051 / DSM 10 / JCM 1465 / NBRC 13719 / NCIMB 3610 / NRRL NRS-744 / VKM B-501</strain>
    </source>
</reference>
<reference evidence="12 13" key="11">
    <citation type="journal article" date="2015" name="Proc. Natl. Acad. Sci. U.S.A.">
        <title>Structural basis for the geometry-driven localization of a small protein.</title>
        <authorList>
            <person name="Gill R.L. Jr."/>
            <person name="Castaing J.P."/>
            <person name="Hsin J."/>
            <person name="Tan I.S."/>
            <person name="Wang X."/>
            <person name="Huang K.C."/>
            <person name="Tian F."/>
            <person name="Ramamurthi K.S."/>
        </authorList>
    </citation>
    <scope>STRUCTURE BY NMR</scope>
    <scope>SUBCELLULAR LOCATION</scope>
    <scope>MUTAGENESIS OF ARG-17</scope>
    <source>
        <strain>168 / PY79</strain>
    </source>
</reference>
<evidence type="ECO:0000269" key="1">
    <source>
    </source>
</evidence>
<evidence type="ECO:0000269" key="2">
    <source>
    </source>
</evidence>
<evidence type="ECO:0000269" key="3">
    <source>
    </source>
</evidence>
<evidence type="ECO:0000269" key="4">
    <source>
    </source>
</evidence>
<evidence type="ECO:0000269" key="5">
    <source>
    </source>
</evidence>
<evidence type="ECO:0000269" key="6">
    <source>
    </source>
</evidence>
<evidence type="ECO:0000269" key="7">
    <source>
    </source>
</evidence>
<evidence type="ECO:0000269" key="8">
    <source>
    </source>
</evidence>
<evidence type="ECO:0000269" key="9">
    <source>
    </source>
</evidence>
<evidence type="ECO:0000303" key="10">
    <source>
    </source>
</evidence>
<evidence type="ECO:0000305" key="11"/>
<evidence type="ECO:0007744" key="12">
    <source>
        <dbReference type="PDB" id="2MVH"/>
    </source>
</evidence>
<evidence type="ECO:0007744" key="13">
    <source>
        <dbReference type="PDB" id="2MVJ"/>
    </source>
</evidence>
<evidence type="ECO:0007829" key="14">
    <source>
        <dbReference type="PDB" id="2MVH"/>
    </source>
</evidence>
<gene>
    <name evidence="10" type="primary">spoVM</name>
    <name type="ordered locus">BSU15810</name>
</gene>
<proteinExistence type="evidence at protein level"/>
<accession>P37817</accession>
<name>SPOVM_BACSU</name>
<keyword id="KW-0002">3D-structure</keyword>
<keyword id="KW-0472">Membrane</keyword>
<keyword id="KW-1185">Reference proteome</keyword>
<keyword id="KW-0749">Sporulation</keyword>
<sequence>MKFYTIKLPKFLGGIVRAMLGSFRKD</sequence>